<protein>
    <recommendedName>
        <fullName evidence="1">DNA repair protein RecO</fullName>
    </recommendedName>
    <alternativeName>
        <fullName evidence="1">Recombination protein O</fullName>
    </alternativeName>
</protein>
<dbReference type="EMBL" id="CP001147">
    <property type="protein sequence ID" value="ACI21228.1"/>
    <property type="molecule type" value="Genomic_DNA"/>
</dbReference>
<dbReference type="RefSeq" id="WP_012545948.1">
    <property type="nucleotide sequence ID" value="NC_011296.1"/>
</dbReference>
<dbReference type="RefSeq" id="YP_002248192.1">
    <property type="nucleotide sequence ID" value="NC_011296.1"/>
</dbReference>
<dbReference type="SMR" id="B5YIN3"/>
<dbReference type="STRING" id="289376.THEYE_A0345"/>
<dbReference type="EnsemblBacteria" id="ACI21228">
    <property type="protein sequence ID" value="ACI21228"/>
    <property type="gene ID" value="THEYE_A0345"/>
</dbReference>
<dbReference type="KEGG" id="tye:THEYE_A0345"/>
<dbReference type="PATRIC" id="fig|289376.4.peg.338"/>
<dbReference type="eggNOG" id="COG1381">
    <property type="taxonomic scope" value="Bacteria"/>
</dbReference>
<dbReference type="HOGENOM" id="CLU_066632_1_0_0"/>
<dbReference type="InParanoid" id="B5YIN3"/>
<dbReference type="OrthoDB" id="9789152at2"/>
<dbReference type="Proteomes" id="UP000000718">
    <property type="component" value="Chromosome"/>
</dbReference>
<dbReference type="GO" id="GO:0043590">
    <property type="term" value="C:bacterial nucleoid"/>
    <property type="evidence" value="ECO:0000318"/>
    <property type="project" value="GO_Central"/>
</dbReference>
<dbReference type="GO" id="GO:0006310">
    <property type="term" value="P:DNA recombination"/>
    <property type="evidence" value="ECO:0007669"/>
    <property type="project" value="UniProtKB-UniRule"/>
</dbReference>
<dbReference type="GO" id="GO:0006302">
    <property type="term" value="P:double-strand break repair"/>
    <property type="evidence" value="ECO:0000318"/>
    <property type="project" value="GO_Central"/>
</dbReference>
<dbReference type="Gene3D" id="2.40.50.140">
    <property type="entry name" value="Nucleic acid-binding proteins"/>
    <property type="match status" value="1"/>
</dbReference>
<dbReference type="Gene3D" id="1.20.1440.120">
    <property type="entry name" value="Recombination protein O, C-terminal domain"/>
    <property type="match status" value="1"/>
</dbReference>
<dbReference type="HAMAP" id="MF_00201">
    <property type="entry name" value="RecO"/>
    <property type="match status" value="1"/>
</dbReference>
<dbReference type="InterPro" id="IPR037278">
    <property type="entry name" value="ARFGAP/RecO"/>
</dbReference>
<dbReference type="InterPro" id="IPR022572">
    <property type="entry name" value="DNA_rep/recomb_RecO_N"/>
</dbReference>
<dbReference type="InterPro" id="IPR012340">
    <property type="entry name" value="NA-bd_OB-fold"/>
</dbReference>
<dbReference type="InterPro" id="IPR003717">
    <property type="entry name" value="RecO"/>
</dbReference>
<dbReference type="InterPro" id="IPR042242">
    <property type="entry name" value="RecO_C"/>
</dbReference>
<dbReference type="NCBIfam" id="TIGR00613">
    <property type="entry name" value="reco"/>
    <property type="match status" value="1"/>
</dbReference>
<dbReference type="PANTHER" id="PTHR33991">
    <property type="entry name" value="DNA REPAIR PROTEIN RECO"/>
    <property type="match status" value="1"/>
</dbReference>
<dbReference type="PANTHER" id="PTHR33991:SF1">
    <property type="entry name" value="DNA REPAIR PROTEIN RECO"/>
    <property type="match status" value="1"/>
</dbReference>
<dbReference type="Pfam" id="PF02565">
    <property type="entry name" value="RecO_C"/>
    <property type="match status" value="1"/>
</dbReference>
<dbReference type="Pfam" id="PF11967">
    <property type="entry name" value="RecO_N"/>
    <property type="match status" value="1"/>
</dbReference>
<dbReference type="SUPFAM" id="SSF57863">
    <property type="entry name" value="ArfGap/RecO-like zinc finger"/>
    <property type="match status" value="1"/>
</dbReference>
<dbReference type="SUPFAM" id="SSF50249">
    <property type="entry name" value="Nucleic acid-binding proteins"/>
    <property type="match status" value="1"/>
</dbReference>
<comment type="function">
    <text evidence="1">Involved in DNA repair and RecF pathway recombination.</text>
</comment>
<comment type="similarity">
    <text evidence="1">Belongs to the RecO family.</text>
</comment>
<evidence type="ECO:0000255" key="1">
    <source>
        <dbReference type="HAMAP-Rule" id="MF_00201"/>
    </source>
</evidence>
<reference key="1">
    <citation type="submission" date="2008-08" db="EMBL/GenBank/DDBJ databases">
        <title>The complete genome sequence of Thermodesulfovibrio yellowstonii strain ATCC 51303 / DSM 11347 / YP87.</title>
        <authorList>
            <person name="Dodson R.J."/>
            <person name="Durkin A.S."/>
            <person name="Wu M."/>
            <person name="Eisen J."/>
            <person name="Sutton G."/>
        </authorList>
    </citation>
    <scope>NUCLEOTIDE SEQUENCE [LARGE SCALE GENOMIC DNA]</scope>
    <source>
        <strain>ATCC 51303 / DSM 11347 / YP87</strain>
    </source>
</reference>
<feature type="chain" id="PRO_1000193430" description="DNA repair protein RecO">
    <location>
        <begin position="1"/>
        <end position="250"/>
    </location>
</feature>
<accession>B5YIN3</accession>
<name>RECO_THEYD</name>
<proteinExistence type="inferred from homology"/>
<keyword id="KW-0227">DNA damage</keyword>
<keyword id="KW-0233">DNA recombination</keyword>
<keyword id="KW-0234">DNA repair</keyword>
<keyword id="KW-1185">Reference proteome</keyword>
<organism>
    <name type="scientific">Thermodesulfovibrio yellowstonii (strain ATCC 51303 / DSM 11347 / YP87)</name>
    <dbReference type="NCBI Taxonomy" id="289376"/>
    <lineage>
        <taxon>Bacteria</taxon>
        <taxon>Pseudomonadati</taxon>
        <taxon>Nitrospirota</taxon>
        <taxon>Thermodesulfovibrionia</taxon>
        <taxon>Thermodesulfovibrionales</taxon>
        <taxon>Thermodesulfovibrionaceae</taxon>
        <taxon>Thermodesulfovibrio</taxon>
    </lineage>
</organism>
<gene>
    <name evidence="1" type="primary">recO</name>
    <name type="ordered locus">THEYE_A0345</name>
</gene>
<sequence>MHYSTEAIVLKNIPYGEADLIVTYLTKNYGLLNLFAKSPRKIKSRFGSSLEPLTYSQISFIGKEDNLQKIIQSDIIHPFQTIRENYRLFLQIANALRFLIQALPKKEPNSELFYLLLNTLLYLEKRIKPDNYILFLKVRGLSILGYLPDFKNCGVCRQELKEEFYYSSGFIICKKCSSSYHYSSSALPIPISQGVIKLLKEISTWTLNFLERVKISDKLFNEMEKFLQNHIFTVLGYNKTWDTEKNITAS</sequence>